<name>FIS_HAEIG</name>
<keyword id="KW-0010">Activator</keyword>
<keyword id="KW-0238">DNA-binding</keyword>
<keyword id="KW-0804">Transcription</keyword>
<keyword id="KW-0805">Transcription regulation</keyword>
<comment type="function">
    <text evidence="1">Activates ribosomal RNA transcription. Plays a direct role in upstream activation of rRNA promoters.</text>
</comment>
<comment type="subunit">
    <text evidence="1">Homodimer.</text>
</comment>
<comment type="similarity">
    <text evidence="1">Belongs to the transcriptional regulatory Fis family.</text>
</comment>
<evidence type="ECO:0000255" key="1">
    <source>
        <dbReference type="HAMAP-Rule" id="MF_00166"/>
    </source>
</evidence>
<organism>
    <name type="scientific">Haemophilus influenzae (strain PittGG)</name>
    <dbReference type="NCBI Taxonomy" id="374931"/>
    <lineage>
        <taxon>Bacteria</taxon>
        <taxon>Pseudomonadati</taxon>
        <taxon>Pseudomonadota</taxon>
        <taxon>Gammaproteobacteria</taxon>
        <taxon>Pasteurellales</taxon>
        <taxon>Pasteurellaceae</taxon>
        <taxon>Haemophilus</taxon>
    </lineage>
</organism>
<gene>
    <name evidence="1" type="primary">fis</name>
    <name type="ordered locus">CGSHiGG_08475</name>
</gene>
<accession>A5UIB9</accession>
<proteinExistence type="inferred from homology"/>
<dbReference type="EMBL" id="CP000672">
    <property type="protein sequence ID" value="ABR00525.1"/>
    <property type="molecule type" value="Genomic_DNA"/>
</dbReference>
<dbReference type="SMR" id="A5UIB9"/>
<dbReference type="KEGG" id="hiq:CGSHiGG_08475"/>
<dbReference type="HOGENOM" id="CLU_158040_3_0_6"/>
<dbReference type="Proteomes" id="UP000001990">
    <property type="component" value="Chromosome"/>
</dbReference>
<dbReference type="GO" id="GO:0003700">
    <property type="term" value="F:DNA-binding transcription factor activity"/>
    <property type="evidence" value="ECO:0007669"/>
    <property type="project" value="UniProtKB-UniRule"/>
</dbReference>
<dbReference type="GO" id="GO:0043565">
    <property type="term" value="F:sequence-specific DNA binding"/>
    <property type="evidence" value="ECO:0007669"/>
    <property type="project" value="InterPro"/>
</dbReference>
<dbReference type="FunFam" id="1.10.10.60:FF:000006">
    <property type="entry name" value="DNA-binding protein Fis"/>
    <property type="match status" value="1"/>
</dbReference>
<dbReference type="Gene3D" id="1.10.10.60">
    <property type="entry name" value="Homeodomain-like"/>
    <property type="match status" value="1"/>
</dbReference>
<dbReference type="HAMAP" id="MF_00166">
    <property type="entry name" value="DNA_binding_Fis"/>
    <property type="match status" value="1"/>
</dbReference>
<dbReference type="InterPro" id="IPR005412">
    <property type="entry name" value="Fis_DNA-bd"/>
</dbReference>
<dbReference type="InterPro" id="IPR009057">
    <property type="entry name" value="Homeodomain-like_sf"/>
</dbReference>
<dbReference type="InterPro" id="IPR002197">
    <property type="entry name" value="HTH_Fis"/>
</dbReference>
<dbReference type="InterPro" id="IPR050207">
    <property type="entry name" value="Trans_regulatory_Fis"/>
</dbReference>
<dbReference type="NCBIfam" id="NF001659">
    <property type="entry name" value="PRK00430.1"/>
    <property type="match status" value="1"/>
</dbReference>
<dbReference type="PANTHER" id="PTHR47918">
    <property type="entry name" value="DNA-BINDING PROTEIN FIS"/>
    <property type="match status" value="1"/>
</dbReference>
<dbReference type="PANTHER" id="PTHR47918:SF1">
    <property type="entry name" value="DNA-BINDING PROTEIN FIS"/>
    <property type="match status" value="1"/>
</dbReference>
<dbReference type="Pfam" id="PF02954">
    <property type="entry name" value="HTH_8"/>
    <property type="match status" value="1"/>
</dbReference>
<dbReference type="PIRSF" id="PIRSF002097">
    <property type="entry name" value="DNA-binding_Fis"/>
    <property type="match status" value="1"/>
</dbReference>
<dbReference type="PRINTS" id="PR01591">
    <property type="entry name" value="DNABINDNGFIS"/>
</dbReference>
<dbReference type="PRINTS" id="PR01590">
    <property type="entry name" value="HTHFIS"/>
</dbReference>
<dbReference type="SUPFAM" id="SSF46689">
    <property type="entry name" value="Homeodomain-like"/>
    <property type="match status" value="1"/>
</dbReference>
<protein>
    <recommendedName>
        <fullName evidence="1">DNA-binding protein Fis</fullName>
    </recommendedName>
</protein>
<feature type="chain" id="PRO_1000023329" description="DNA-binding protein Fis">
    <location>
        <begin position="1"/>
        <end position="99"/>
    </location>
</feature>
<feature type="DNA-binding region" description="H-T-H motif" evidence="1">
    <location>
        <begin position="75"/>
        <end position="94"/>
    </location>
</feature>
<reference key="1">
    <citation type="journal article" date="2007" name="Genome Biol.">
        <title>Characterization and modeling of the Haemophilus influenzae core and supragenomes based on the complete genomic sequences of Rd and 12 clinical nontypeable strains.</title>
        <authorList>
            <person name="Hogg J.S."/>
            <person name="Hu F.Z."/>
            <person name="Janto B."/>
            <person name="Boissy R."/>
            <person name="Hayes J."/>
            <person name="Keefe R."/>
            <person name="Post J.C."/>
            <person name="Ehrlich G.D."/>
        </authorList>
    </citation>
    <scope>NUCLEOTIDE SEQUENCE [LARGE SCALE GENOMIC DNA]</scope>
    <source>
        <strain>PittGG</strain>
    </source>
</reference>
<sequence length="99" mass="11167">MLEQQRNSADALTVSVLNAQSQVTSKPLRDSVKQALRNYLAQLDGQDVNDLYELVLAEVEHPMLDMIMQYTRGNQTRAANMLGINRGTLRKKLKKYGMG</sequence>